<comment type="function">
    <text evidence="1">Removes the formyl group from the N-terminal Met of newly synthesized proteins. Requires at least a dipeptide for an efficient rate of reaction. N-terminal L-methionine is a prerequisite for activity but the enzyme has broad specificity at other positions.</text>
</comment>
<comment type="catalytic activity">
    <reaction evidence="1">
        <text>N-terminal N-formyl-L-methionyl-[peptide] + H2O = N-terminal L-methionyl-[peptide] + formate</text>
        <dbReference type="Rhea" id="RHEA:24420"/>
        <dbReference type="Rhea" id="RHEA-COMP:10639"/>
        <dbReference type="Rhea" id="RHEA-COMP:10640"/>
        <dbReference type="ChEBI" id="CHEBI:15377"/>
        <dbReference type="ChEBI" id="CHEBI:15740"/>
        <dbReference type="ChEBI" id="CHEBI:49298"/>
        <dbReference type="ChEBI" id="CHEBI:64731"/>
        <dbReference type="EC" id="3.5.1.88"/>
    </reaction>
</comment>
<comment type="cofactor">
    <cofactor evidence="1">
        <name>Fe(2+)</name>
        <dbReference type="ChEBI" id="CHEBI:29033"/>
    </cofactor>
    <text evidence="1">Binds 1 Fe(2+) ion.</text>
</comment>
<comment type="similarity">
    <text evidence="1">Belongs to the polypeptide deformylase family.</text>
</comment>
<organism>
    <name type="scientific">Pseudomonas putida (strain ATCC 47054 / DSM 6125 / CFBP 8728 / NCIMB 11950 / KT2440)</name>
    <dbReference type="NCBI Taxonomy" id="160488"/>
    <lineage>
        <taxon>Bacteria</taxon>
        <taxon>Pseudomonadati</taxon>
        <taxon>Pseudomonadota</taxon>
        <taxon>Gammaproteobacteria</taxon>
        <taxon>Pseudomonadales</taxon>
        <taxon>Pseudomonadaceae</taxon>
        <taxon>Pseudomonas</taxon>
    </lineage>
</organism>
<reference key="1">
    <citation type="journal article" date="2002" name="Environ. Microbiol.">
        <title>Complete genome sequence and comparative analysis of the metabolically versatile Pseudomonas putida KT2440.</title>
        <authorList>
            <person name="Nelson K.E."/>
            <person name="Weinel C."/>
            <person name="Paulsen I.T."/>
            <person name="Dodson R.J."/>
            <person name="Hilbert H."/>
            <person name="Martins dos Santos V.A.P."/>
            <person name="Fouts D.E."/>
            <person name="Gill S.R."/>
            <person name="Pop M."/>
            <person name="Holmes M."/>
            <person name="Brinkac L.M."/>
            <person name="Beanan M.J."/>
            <person name="DeBoy R.T."/>
            <person name="Daugherty S.C."/>
            <person name="Kolonay J.F."/>
            <person name="Madupu R."/>
            <person name="Nelson W.C."/>
            <person name="White O."/>
            <person name="Peterson J.D."/>
            <person name="Khouri H.M."/>
            <person name="Hance I."/>
            <person name="Chris Lee P."/>
            <person name="Holtzapple E.K."/>
            <person name="Scanlan D."/>
            <person name="Tran K."/>
            <person name="Moazzez A."/>
            <person name="Utterback T.R."/>
            <person name="Rizzo M."/>
            <person name="Lee K."/>
            <person name="Kosack D."/>
            <person name="Moestl D."/>
            <person name="Wedler H."/>
            <person name="Lauber J."/>
            <person name="Stjepandic D."/>
            <person name="Hoheisel J."/>
            <person name="Straetz M."/>
            <person name="Heim S."/>
            <person name="Kiewitz C."/>
            <person name="Eisen J.A."/>
            <person name="Timmis K.N."/>
            <person name="Duesterhoeft A."/>
            <person name="Tuemmler B."/>
            <person name="Fraser C.M."/>
        </authorList>
    </citation>
    <scope>NUCLEOTIDE SEQUENCE [LARGE SCALE GENOMIC DNA]</scope>
    <source>
        <strain>ATCC 47054 / DSM 6125 / CFBP 8728 / NCIMB 11950 / KT2440</strain>
    </source>
</reference>
<protein>
    <recommendedName>
        <fullName evidence="1">Peptide deformylase 2</fullName>
        <shortName evidence="1">PDF 2</shortName>
        <ecNumber evidence="1">3.5.1.88</ecNumber>
    </recommendedName>
    <alternativeName>
        <fullName evidence="1">Polypeptide deformylase 2</fullName>
    </alternativeName>
</protein>
<proteinExistence type="inferred from homology"/>
<dbReference type="EC" id="3.5.1.88" evidence="1"/>
<dbReference type="EMBL" id="AE015451">
    <property type="protein sequence ID" value="AAN70132.1"/>
    <property type="molecule type" value="Genomic_DNA"/>
</dbReference>
<dbReference type="RefSeq" id="NP_746668.1">
    <property type="nucleotide sequence ID" value="NC_002947.4"/>
</dbReference>
<dbReference type="SMR" id="Q88EA7"/>
<dbReference type="STRING" id="160488.PP_4559"/>
<dbReference type="PaxDb" id="160488-PP_4559"/>
<dbReference type="KEGG" id="ppu:PP_4559"/>
<dbReference type="PATRIC" id="fig|160488.4.peg.4862"/>
<dbReference type="eggNOG" id="COG0242">
    <property type="taxonomic scope" value="Bacteria"/>
</dbReference>
<dbReference type="HOGENOM" id="CLU_061901_5_2_6"/>
<dbReference type="OrthoDB" id="9804313at2"/>
<dbReference type="PhylomeDB" id="Q88EA7"/>
<dbReference type="BioCyc" id="PPUT160488:G1G01-4867-MONOMER"/>
<dbReference type="Proteomes" id="UP000000556">
    <property type="component" value="Chromosome"/>
</dbReference>
<dbReference type="GO" id="GO:0046872">
    <property type="term" value="F:metal ion binding"/>
    <property type="evidence" value="ECO:0007669"/>
    <property type="project" value="UniProtKB-KW"/>
</dbReference>
<dbReference type="GO" id="GO:0042586">
    <property type="term" value="F:peptide deformylase activity"/>
    <property type="evidence" value="ECO:0007669"/>
    <property type="project" value="UniProtKB-UniRule"/>
</dbReference>
<dbReference type="GO" id="GO:0043686">
    <property type="term" value="P:co-translational protein modification"/>
    <property type="evidence" value="ECO:0007669"/>
    <property type="project" value="TreeGrafter"/>
</dbReference>
<dbReference type="GO" id="GO:0006412">
    <property type="term" value="P:translation"/>
    <property type="evidence" value="ECO:0007669"/>
    <property type="project" value="UniProtKB-UniRule"/>
</dbReference>
<dbReference type="CDD" id="cd00487">
    <property type="entry name" value="Pep_deformylase"/>
    <property type="match status" value="1"/>
</dbReference>
<dbReference type="FunFam" id="3.90.45.10:FF:000003">
    <property type="entry name" value="Peptide deformylase"/>
    <property type="match status" value="1"/>
</dbReference>
<dbReference type="Gene3D" id="3.90.45.10">
    <property type="entry name" value="Peptide deformylase"/>
    <property type="match status" value="1"/>
</dbReference>
<dbReference type="HAMAP" id="MF_00163">
    <property type="entry name" value="Pep_deformylase"/>
    <property type="match status" value="1"/>
</dbReference>
<dbReference type="InterPro" id="IPR023635">
    <property type="entry name" value="Peptide_deformylase"/>
</dbReference>
<dbReference type="InterPro" id="IPR036821">
    <property type="entry name" value="Peptide_deformylase_sf"/>
</dbReference>
<dbReference type="NCBIfam" id="TIGR00079">
    <property type="entry name" value="pept_deformyl"/>
    <property type="match status" value="1"/>
</dbReference>
<dbReference type="NCBIfam" id="NF001159">
    <property type="entry name" value="PRK00150.1-3"/>
    <property type="match status" value="1"/>
</dbReference>
<dbReference type="PANTHER" id="PTHR10458">
    <property type="entry name" value="PEPTIDE DEFORMYLASE"/>
    <property type="match status" value="1"/>
</dbReference>
<dbReference type="PANTHER" id="PTHR10458:SF20">
    <property type="entry name" value="PEPTIDE DEFORMYLASE 1"/>
    <property type="match status" value="1"/>
</dbReference>
<dbReference type="Pfam" id="PF01327">
    <property type="entry name" value="Pep_deformylase"/>
    <property type="match status" value="1"/>
</dbReference>
<dbReference type="PIRSF" id="PIRSF004749">
    <property type="entry name" value="Pep_def"/>
    <property type="match status" value="1"/>
</dbReference>
<dbReference type="PRINTS" id="PR01576">
    <property type="entry name" value="PDEFORMYLASE"/>
</dbReference>
<dbReference type="SUPFAM" id="SSF56420">
    <property type="entry name" value="Peptide deformylase"/>
    <property type="match status" value="1"/>
</dbReference>
<gene>
    <name evidence="1" type="primary">def2</name>
    <name type="ordered locus">PP_4559</name>
</gene>
<name>DEF2_PSEPK</name>
<feature type="chain" id="PRO_0000082821" description="Peptide deformylase 2">
    <location>
        <begin position="1"/>
        <end position="178"/>
    </location>
</feature>
<feature type="active site" evidence="1">
    <location>
        <position position="144"/>
    </location>
</feature>
<feature type="binding site" evidence="1">
    <location>
        <position position="101"/>
    </location>
    <ligand>
        <name>Fe cation</name>
        <dbReference type="ChEBI" id="CHEBI:24875"/>
    </ligand>
</feature>
<feature type="binding site" evidence="1">
    <location>
        <position position="143"/>
    </location>
    <ligand>
        <name>Fe cation</name>
        <dbReference type="ChEBI" id="CHEBI:24875"/>
    </ligand>
</feature>
<feature type="binding site" evidence="1">
    <location>
        <position position="147"/>
    </location>
    <ligand>
        <name>Fe cation</name>
        <dbReference type="ChEBI" id="CHEBI:24875"/>
    </ligand>
</feature>
<sequence length="178" mass="19852">MIRDILKMGDERLLRIAPPVPEHMLGSAELQQLIDDMFETMRHVGGVGLAAPQVGIDLQLVIFGFERSERYPDAEAVPQTILLNPVITPTSSEVEDGWEGCLSVPGLRGVVPRFKHICYQGIDPQGSPINRFADGFHARVVQHECDHLIGRLYPSRIQDFAKFGYTEVLFPGLEVSED</sequence>
<accession>Q88EA7</accession>
<keyword id="KW-0378">Hydrolase</keyword>
<keyword id="KW-0408">Iron</keyword>
<keyword id="KW-0479">Metal-binding</keyword>
<keyword id="KW-0648">Protein biosynthesis</keyword>
<keyword id="KW-1185">Reference proteome</keyword>
<evidence type="ECO:0000255" key="1">
    <source>
        <dbReference type="HAMAP-Rule" id="MF_00163"/>
    </source>
</evidence>